<keyword id="KW-0002">3D-structure</keyword>
<keyword id="KW-0025">Alternative splicing</keyword>
<keyword id="KW-0067">ATP-binding</keyword>
<keyword id="KW-0158">Chromosome</keyword>
<keyword id="KW-0225">Disease variant</keyword>
<keyword id="KW-0227">DNA damage</keyword>
<keyword id="KW-0234">DNA repair</keyword>
<keyword id="KW-0238">DNA-binding</keyword>
<keyword id="KW-0242">Dwarfism</keyword>
<keyword id="KW-0991">Intellectual disability</keyword>
<keyword id="KW-0418">Kinase</keyword>
<keyword id="KW-0464">Manganese</keyword>
<keyword id="KW-0547">Nucleotide-binding</keyword>
<keyword id="KW-0539">Nucleus</keyword>
<keyword id="KW-0597">Phosphoprotein</keyword>
<keyword id="KW-1267">Proteomics identification</keyword>
<keyword id="KW-1185">Reference proteome</keyword>
<keyword id="KW-0677">Repeat</keyword>
<keyword id="KW-0723">Serine/threonine-protein kinase</keyword>
<keyword id="KW-0808">Transferase</keyword>
<evidence type="ECO:0000250" key="1">
    <source>
        <dbReference type="UniProtKB" id="Q9JKK8"/>
    </source>
</evidence>
<evidence type="ECO:0000255" key="2">
    <source>
        <dbReference type="PROSITE-ProRule" id="PRU00269"/>
    </source>
</evidence>
<evidence type="ECO:0000255" key="3">
    <source>
        <dbReference type="PROSITE-ProRule" id="PRU00534"/>
    </source>
</evidence>
<evidence type="ECO:0000255" key="4">
    <source>
        <dbReference type="PROSITE-ProRule" id="PRU00535"/>
    </source>
</evidence>
<evidence type="ECO:0000256" key="5">
    <source>
        <dbReference type="SAM" id="MobiDB-lite"/>
    </source>
</evidence>
<evidence type="ECO:0000269" key="6">
    <source>
    </source>
</evidence>
<evidence type="ECO:0000269" key="7">
    <source>
    </source>
</evidence>
<evidence type="ECO:0000269" key="8">
    <source>
    </source>
</evidence>
<evidence type="ECO:0000269" key="9">
    <source>
    </source>
</evidence>
<evidence type="ECO:0000269" key="10">
    <source>
    </source>
</evidence>
<evidence type="ECO:0000269" key="11">
    <source>
    </source>
</evidence>
<evidence type="ECO:0000269" key="12">
    <source>
    </source>
</evidence>
<evidence type="ECO:0000269" key="13">
    <source>
    </source>
</evidence>
<evidence type="ECO:0000269" key="14">
    <source>
    </source>
</evidence>
<evidence type="ECO:0000269" key="15">
    <source>
    </source>
</evidence>
<evidence type="ECO:0000269" key="16">
    <source>
    </source>
</evidence>
<evidence type="ECO:0000269" key="17">
    <source>
    </source>
</evidence>
<evidence type="ECO:0000269" key="18">
    <source>
    </source>
</evidence>
<evidence type="ECO:0000269" key="19">
    <source>
    </source>
</evidence>
<evidence type="ECO:0000269" key="20">
    <source>
    </source>
</evidence>
<evidence type="ECO:0000269" key="21">
    <source>
    </source>
</evidence>
<evidence type="ECO:0000269" key="22">
    <source>
    </source>
</evidence>
<evidence type="ECO:0000269" key="23">
    <source>
    </source>
</evidence>
<evidence type="ECO:0000269" key="24">
    <source>
    </source>
</evidence>
<evidence type="ECO:0000269" key="25">
    <source>
    </source>
</evidence>
<evidence type="ECO:0000269" key="26">
    <source>
    </source>
</evidence>
<evidence type="ECO:0000269" key="27">
    <source>
    </source>
</evidence>
<evidence type="ECO:0000269" key="28">
    <source>
    </source>
</evidence>
<evidence type="ECO:0000269" key="29">
    <source>
    </source>
</evidence>
<evidence type="ECO:0000269" key="30">
    <source>
    </source>
</evidence>
<evidence type="ECO:0000269" key="31">
    <source>
    </source>
</evidence>
<evidence type="ECO:0000269" key="32">
    <source>
    </source>
</evidence>
<evidence type="ECO:0000269" key="33">
    <source>
    </source>
</evidence>
<evidence type="ECO:0000269" key="34">
    <source>
    </source>
</evidence>
<evidence type="ECO:0000269" key="35">
    <source>
    </source>
</evidence>
<evidence type="ECO:0000269" key="36">
    <source>
    </source>
</evidence>
<evidence type="ECO:0000269" key="37">
    <source>
    </source>
</evidence>
<evidence type="ECO:0000269" key="38">
    <source>
    </source>
</evidence>
<evidence type="ECO:0000269" key="39">
    <source>
    </source>
</evidence>
<evidence type="ECO:0000269" key="40">
    <source>
    </source>
</evidence>
<evidence type="ECO:0000269" key="41">
    <source>
    </source>
</evidence>
<evidence type="ECO:0000269" key="42">
    <source>
    </source>
</evidence>
<evidence type="ECO:0000269" key="43">
    <source>
    </source>
</evidence>
<evidence type="ECO:0000269" key="44">
    <source>
    </source>
</evidence>
<evidence type="ECO:0000269" key="45">
    <source>
    </source>
</evidence>
<evidence type="ECO:0000269" key="46">
    <source>
    </source>
</evidence>
<evidence type="ECO:0000269" key="47">
    <source>
    </source>
</evidence>
<evidence type="ECO:0000269" key="48">
    <source>
    </source>
</evidence>
<evidence type="ECO:0000269" key="49">
    <source>
    </source>
</evidence>
<evidence type="ECO:0000269" key="50">
    <source>
    </source>
</evidence>
<evidence type="ECO:0000269" key="51">
    <source>
    </source>
</evidence>
<evidence type="ECO:0000269" key="52">
    <source>
    </source>
</evidence>
<evidence type="ECO:0000269" key="53">
    <source>
    </source>
</evidence>
<evidence type="ECO:0000269" key="54">
    <source>
    </source>
</evidence>
<evidence type="ECO:0000269" key="55">
    <source>
    </source>
</evidence>
<evidence type="ECO:0000269" key="56">
    <source>
    </source>
</evidence>
<evidence type="ECO:0000303" key="57">
    <source>
    </source>
</evidence>
<evidence type="ECO:0000303" key="58">
    <source>
    </source>
</evidence>
<evidence type="ECO:0000303" key="59">
    <source ref="4"/>
</evidence>
<evidence type="ECO:0000305" key="60"/>
<evidence type="ECO:0000312" key="61">
    <source>
        <dbReference type="HGNC" id="HGNC:882"/>
    </source>
</evidence>
<evidence type="ECO:0007744" key="62">
    <source>
    </source>
</evidence>
<evidence type="ECO:0007744" key="63">
    <source>
    </source>
</evidence>
<comment type="function">
    <text evidence="1 7 8 9 10 11 13 14 15 17 20 21 22 23 24 27 28 29 32 39 41 43 44 45 46 47 48 49 50 53 54 56">Serine/threonine protein kinase which activates checkpoint signaling upon genotoxic stresses such as ionizing radiation (IR), ultraviolet light (UV), or DNA replication stalling, thereby acting as a DNA damage sensor (PubMed:10597277, PubMed:10608806, PubMed:10859164, PubMed:11721054, PubMed:12791985, PubMed:12814551, PubMed:14657349, PubMed:14729973, PubMed:14742437, PubMed:15210935, PubMed:15496423, PubMed:16260606, PubMed:21144835, PubMed:21777809, PubMed:23273981, PubMed:25083873, PubMed:27723717, PubMed:27723720, PubMed:30139873, PubMed:33848395, PubMed:37788673, PubMed:37832547, PubMed:9427750, PubMed:9636169). Recognizes the substrate consensus sequence [ST]-Q (PubMed:10597277, PubMed:10608806, PubMed:10859164, PubMed:11721054, PubMed:12791985, PubMed:12814551, PubMed:14657349, PubMed:14729973, PubMed:14742437, PubMed:15210935, PubMed:15496423, PubMed:16260606, PubMed:21144835, PubMed:23273981, PubMed:27723717, PubMed:27723720, PubMed:33848395, PubMed:9427750, PubMed:9636169). Phosphorylates BRCA1, CHEK1, MCM2, RAD17, RBBP8, RPA2, SMC1 and p53/TP53, which collectively inhibit DNA replication and mitosis and promote DNA repair, recombination and apoptosis (PubMed:11114888, PubMed:11418864, PubMed:11865061, PubMed:21777809, PubMed:23273981, PubMed:25083873, PubMed:9925639). Phosphorylates 'Ser-139' of histone variant H2AX at sites of DNA damage, thereby regulating DNA damage response mechanism (PubMed:11673449). Required for FANCD2 ubiquitination (PubMed:15314022). Critical for maintenance of fragile site stability and efficient regulation of centrosome duplication (PubMed:12526805). Acts as a regulator of the S-G2 transition by restricting the activity of CDK1 during S-phase to prevent premature entry into G2 (PubMed:30139873). Acts as a regulator of the nuclear envelope integrity in response to DNA damage and stress (PubMed:25083873, PubMed:37788673, PubMed:37832547). Acts as a mechanical stress sensor at the nuclear envelope: relocalizes to the nuclear envelope in response to mechanical stress and mediates a checkpoint via phosphorylation of CHEK1 (PubMed:25083873). Also promotes nuclear envelope rupture in response to DNA damage by mediating phosphorylation of LMNA at 'Ser-282', leading to lamin disassembly (PubMed:37832547). Involved in the inflammatory response to genome instability and double-stranded DNA breaks: acts by localizing to micronuclei arising from genome instability and catalyzing phosphorylation of LMNA at 'Ser-395', priming LMNA for subsequent phosphorylation by CDK1 and micronuclei envelope rupture (PubMed:37788673). The rupture of micronuclear envelope triggers the cGAS-STING pathway thereby activating the type I interferon response and innate immunity (PubMed:37788673). Positively regulates the restart of stalled replication forks following activation by the KHDC3L-OOEP scaffold complex (By similarity).</text>
</comment>
<comment type="catalytic activity">
    <reaction evidence="43 45 46 49 50">
        <text>L-seryl-[protein] + ATP = O-phospho-L-seryl-[protein] + ADP + H(+)</text>
        <dbReference type="Rhea" id="RHEA:17989"/>
        <dbReference type="Rhea" id="RHEA-COMP:9863"/>
        <dbReference type="Rhea" id="RHEA-COMP:11604"/>
        <dbReference type="ChEBI" id="CHEBI:15378"/>
        <dbReference type="ChEBI" id="CHEBI:29999"/>
        <dbReference type="ChEBI" id="CHEBI:30616"/>
        <dbReference type="ChEBI" id="CHEBI:83421"/>
        <dbReference type="ChEBI" id="CHEBI:456216"/>
        <dbReference type="EC" id="2.7.11.1"/>
    </reaction>
    <physiologicalReaction direction="left-to-right" evidence="43 45 46 49 50">
        <dbReference type="Rhea" id="RHEA:17990"/>
    </physiologicalReaction>
</comment>
<comment type="catalytic activity">
    <reaction evidence="40 41 45 46">
        <text>L-threonyl-[protein] + ATP = O-phospho-L-threonyl-[protein] + ADP + H(+)</text>
        <dbReference type="Rhea" id="RHEA:46608"/>
        <dbReference type="Rhea" id="RHEA-COMP:11060"/>
        <dbReference type="Rhea" id="RHEA-COMP:11605"/>
        <dbReference type="ChEBI" id="CHEBI:15378"/>
        <dbReference type="ChEBI" id="CHEBI:30013"/>
        <dbReference type="ChEBI" id="CHEBI:30616"/>
        <dbReference type="ChEBI" id="CHEBI:61977"/>
        <dbReference type="ChEBI" id="CHEBI:456216"/>
        <dbReference type="EC" id="2.7.11.1"/>
    </reaction>
    <physiologicalReaction direction="left-to-right" evidence="40 41 45 46">
        <dbReference type="Rhea" id="RHEA:46609"/>
    </physiologicalReaction>
</comment>
<comment type="cofactor">
    <cofactor evidence="8">
        <name>Mn(2+)</name>
        <dbReference type="ChEBI" id="CHEBI:29035"/>
    </cofactor>
</comment>
<comment type="activity regulation">
    <text evidence="7 23 33 41 45 46 47 55">Serine/threonine-protein kinase activity is directly stimulated by TOPBP1 (PubMed:16530042, PubMed:21777809). ATR kinase activity is also directly activated by ETAA1, independently of TOPBP1 (PubMed:27723717, PubMed:27723720, PubMed:30139873). Activated by DNA and inhibited by BCR-ABL oncogene (PubMed:10597277). Slightly activated by ATRIP (PubMed:14729973). Inhibited by caffeine, wortmannin and LY294002 (PubMed:9766667).</text>
</comment>
<comment type="subunit">
    <text evidence="6 14 19 20 22 23 26 30 31 35 36 37 38 40 41 48">Forms a heterodimer with ATRIP, forming the ATR-ATRIP complex (PubMed:11721054, PubMed:12791985, PubMed:14729973, PubMed:15758953, PubMed:21777809). Present in a complex containing ATRIP and RPA-coated single-stranded DNA (PubMed:12791985, PubMed:14729973). Binds to DNA, and to UV-damaged DNA with higher affinity (PubMed:12791985). Interacts with MSH2 and HDAC2 (PubMed:14657349). Present in a complex containing CHD4 and HDAC2 (PubMed:10545197). Interacts with EEF1E1, the interaction is enhanced by UV irradiation (PubMed:15680327). Interacts with CLSPN and CEP164 (PubMed:12766152, PubMed:18283122). Interacts with TELO2 and TTI1 (PubMed:20427287, PubMed:20801936, PubMed:20810650). Interacts with BCR-ABL after genotoxic stress (PubMed:15050919). Interacts with UHRF2; this interaction promotes ATR activation (PubMed:33848395). Interacts (when phosphorylated) with TOPBP1; interaction takes place when ATR is autophosphorylated at Thr-1989, leading to ATR activation by TOPBP1 (PubMed:21705319, PubMed:21777809).</text>
</comment>
<comment type="interaction">
    <interactant intactId="EBI-968983">
        <id>Q13535</id>
    </interactant>
    <interactant intactId="EBI-747353">
        <id>Q8WXE1</id>
        <label>ATRIP</label>
    </interactant>
    <organismsDiffer>false</organismsDiffer>
    <experiments>5</experiments>
</comment>
<comment type="interaction">
    <interactant intactId="EBI-968983">
        <id>Q13535</id>
    </interactant>
    <interactant intactId="EBI-374880">
        <id>Q99459</id>
        <label>CDC5L</label>
    </interactant>
    <organismsDiffer>false</organismsDiffer>
    <experiments>3</experiments>
</comment>
<comment type="interaction">
    <interactant intactId="EBI-968983">
        <id>Q13535</id>
    </interactant>
    <interactant intactId="EBI-1383449">
        <id>P50750</id>
        <label>CDK9</label>
    </interactant>
    <organismsDiffer>false</organismsDiffer>
    <experiments>3</experiments>
</comment>
<comment type="interaction">
    <interactant intactId="EBI-968983">
        <id>Q13535</id>
    </interactant>
    <interactant intactId="EBI-739784">
        <id>Q9BW66</id>
        <label>CINP</label>
    </interactant>
    <organismsDiffer>false</organismsDiffer>
    <experiments>5</experiments>
</comment>
<comment type="interaction">
    <interactant intactId="EBI-968983">
        <id>Q13535</id>
    </interactant>
    <interactant intactId="EBI-81279">
        <id>Q9Y6K9</id>
        <label>IKBKG</label>
    </interactant>
    <organismsDiffer>false</organismsDiffer>
    <experiments>2</experiments>
</comment>
<comment type="interaction">
    <interactant intactId="EBI-968983">
        <id>Q13535</id>
    </interactant>
    <interactant intactId="EBI-1055680">
        <id>O43156</id>
        <label>TTI1</label>
    </interactant>
    <organismsDiffer>false</organismsDiffer>
    <experiments>2</experiments>
</comment>
<comment type="subcellular location">
    <subcellularLocation>
        <location evidence="10 14 15 21 25 32 35 46 52">Nucleus</location>
    </subcellularLocation>
    <subcellularLocation>
        <location evidence="13">Chromosome</location>
    </subcellularLocation>
    <subcellularLocation>
        <location evidence="44 49 50">Nucleus envelope</location>
    </subcellularLocation>
    <text evidence="21 44 46 49 50">Depending on the cell type, it can also be found in PML nuclear bodies (PubMed:12814551). Recruited to chromatin during S-phase (PubMed:14871897). Redistributes to discrete nuclear foci upon DNA damage, hypoxia or replication fork stalling (PubMed:27723720). Relocalizes to the nuclear envelope in response to mechanical stress or DNA damage (PubMed:25083873, PubMed:37832547). Also localizes to the micronuclear envelope in response to response to genome instability (PubMed:37788673).</text>
</comment>
<comment type="alternative products">
    <event type="alternative splicing"/>
    <isoform>
        <id>Q13535-1</id>
        <name>1</name>
        <sequence type="displayed"/>
    </isoform>
    <isoform>
        <id>Q13535-2</id>
        <name>2</name>
        <sequence type="described" ref="VSP_013305 VSP_013304"/>
    </isoform>
    <isoform>
        <id>Q13535-3</id>
        <name>3</name>
        <sequence type="described" ref="VSP_036907 VSP_036908"/>
    </isoform>
</comment>
<comment type="tissue specificity">
    <text evidence="12 51 52">Ubiquitous, with highest expression in testis.</text>
</comment>
<comment type="tissue specificity">
    <molecule>Isoform 2</molecule>
    <text evidence="12">Isoform 2 is found in pancreas, placenta and liver but not in heart, testis and ovary.</text>
</comment>
<comment type="PTM">
    <text evidence="39 40 41">Phosphorylated (PubMed:21144835). Autophosphorylation at Thr-1989 in response to DNA damage promotes interaction with TOPBP1 and activation of ATR (PubMed:21705319, PubMed:21777809).</text>
</comment>
<comment type="disease" evidence="18">
    <disease id="DI-01008">
        <name>Seckel syndrome 1</name>
        <acronym>SCKL1</acronym>
        <description>A rare autosomal recessive disorder characterized by proportionate dwarfism of prenatal onset associated with low birth weight, growth retardation, severe microcephaly with a bird-headed like appearance, and intellectual disability.</description>
        <dbReference type="MIM" id="210600"/>
    </disease>
    <text>The disease is caused by variants affecting the gene represented in this entry.</text>
</comment>
<comment type="disease" evidence="42">
    <disease id="DI-03427">
        <name>Cutaneous telangiectasia and cancer syndrome, familial</name>
        <acronym>FCTCS</acronym>
        <description>A disease characterized by cutaneous telangiectases in infancy with patchy alopecia over areas of affected skin, thinning of the lateral eyebrows, and mild dental and nail anomalies. Affected individuals are at increased risk of developing oropharyngeal cancer, and other malignancies have been reported as well.</description>
        <dbReference type="MIM" id="614564"/>
    </disease>
    <text>The disease is caused by variants affecting the gene represented in this entry.</text>
</comment>
<comment type="similarity">
    <text evidence="60">Belongs to the PI3/PI4-kinase family. ATM subfamily.</text>
</comment>
<comment type="online information" name="Atlas of Genetics and Cytogenetics in Oncology and Haematology">
    <link uri="https://atlasgeneticsoncology.org/gene/728/ATR"/>
</comment>
<accession>Q13535</accession>
<accession>Q59HB2</accession>
<accession>Q7KYL3</accession>
<accession>Q93051</accession>
<accession>Q9BXK4</accession>
<feature type="chain" id="PRO_0000088844" description="Serine/threonine-protein kinase ATR">
    <location>
        <begin position="1"/>
        <end position="2644"/>
    </location>
</feature>
<feature type="repeat" description="HEAT 1">
    <location>
        <begin position="799"/>
        <end position="835"/>
    </location>
</feature>
<feature type="repeat" description="HEAT 2">
    <location>
        <begin position="1329"/>
        <end position="1365"/>
    </location>
</feature>
<feature type="domain" description="FAT" evidence="3">
    <location>
        <begin position="1640"/>
        <end position="2185"/>
    </location>
</feature>
<feature type="domain" description="PI3K/PI4K catalytic" evidence="2">
    <location>
        <begin position="2296"/>
        <end position="2604"/>
    </location>
</feature>
<feature type="domain" description="FATC" evidence="3 4">
    <location>
        <begin position="2612"/>
        <end position="2644"/>
    </location>
</feature>
<feature type="region of interest" description="Disordered" evidence="5">
    <location>
        <begin position="418"/>
        <end position="450"/>
    </location>
</feature>
<feature type="region of interest" description="G-loop" evidence="2">
    <location>
        <begin position="2302"/>
        <end position="2308"/>
    </location>
</feature>
<feature type="region of interest" description="Catalytic loop" evidence="2">
    <location>
        <begin position="2472"/>
        <end position="2480"/>
    </location>
</feature>
<feature type="region of interest" description="Activation loop" evidence="2">
    <location>
        <begin position="2492"/>
        <end position="2516"/>
    </location>
</feature>
<feature type="modified residue" description="Phosphoserine" evidence="39 41 62">
    <location>
        <position position="428"/>
    </location>
</feature>
<feature type="modified residue" description="Phosphoserine" evidence="41 63">
    <location>
        <position position="435"/>
    </location>
</feature>
<feature type="modified residue" description="Phosphoserine" evidence="63">
    <location>
        <position position="436"/>
    </location>
</feature>
<feature type="modified residue" description="Phosphothreonine; by autocatalysis" evidence="40 41 62 63">
    <location>
        <position position="1989"/>
    </location>
</feature>
<feature type="splice variant" id="VSP_013305" description="In isoform 2." evidence="57">
    <original>E</original>
    <variation>D</variation>
    <location>
        <position position="450"/>
    </location>
</feature>
<feature type="splice variant" id="VSP_013304" description="In isoform 2." evidence="57">
    <location>
        <begin position="451"/>
        <end position="514"/>
    </location>
</feature>
<feature type="splice variant" id="VSP_036907" description="In isoform 3." evidence="59">
    <original>AKTHVLDIEQRLQGVIKTRNRVT</original>
    <variation>VSRRYSLIWAVVLISTNELDMQL</variation>
    <location>
        <begin position="2588"/>
        <end position="2610"/>
    </location>
</feature>
<feature type="splice variant" id="VSP_036908" description="In isoform 3." evidence="59">
    <location>
        <begin position="2611"/>
        <end position="2644"/>
    </location>
</feature>
<feature type="sequence variant" id="VAR_041584" description="In dbSNP:rs35306038." evidence="34">
    <original>T</original>
    <variation>A</variation>
    <location>
        <position position="64"/>
    </location>
</feature>
<feature type="sequence variant" id="VAR_041585" description="In dbSNP:rs28897763." evidence="34">
    <original>H</original>
    <variation>Y</variation>
    <location>
        <position position="90"/>
    </location>
</feature>
<feature type="sequence variant" id="VAR_050532" description="In dbSNP:rs2227928.">
    <original>M</original>
    <variation>T</variation>
    <location>
        <position position="211"/>
    </location>
</feature>
<feature type="sequence variant" id="VAR_041586" description="In dbSNP:rs2229033." evidence="34">
    <original>K</original>
    <variation>N</variation>
    <location>
        <position position="297"/>
    </location>
</feature>
<feature type="sequence variant" id="VAR_041587" description="In dbSNP:rs28897764." evidence="34">
    <original>V</original>
    <variation>I</variation>
    <location>
        <position position="316"/>
    </location>
</feature>
<feature type="sequence variant" id="VAR_041588" description="In dbSNP:rs28910271." evidence="34">
    <original>V</original>
    <variation>M</variation>
    <location>
        <position position="959"/>
    </location>
</feature>
<feature type="sequence variant" id="VAR_041589" description="In dbSNP:rs34253059." evidence="34">
    <original>Y</original>
    <variation>H</variation>
    <location>
        <position position="1087"/>
    </location>
</feature>
<feature type="sequence variant" id="VAR_041590" description="In dbSNP:rs34766606." evidence="34">
    <original>S</original>
    <variation>G</variation>
    <location>
        <position position="1213"/>
    </location>
</feature>
<feature type="sequence variant" id="VAR_041591" description="In a lung squamous cell carcinoma sample; somatic mutation." evidence="34">
    <original>A</original>
    <variation>P</variation>
    <location>
        <position position="1488"/>
    </location>
</feature>
<feature type="sequence variant" id="VAR_050533" description="In dbSNP:rs34124242.">
    <original>I</original>
    <variation>V</variation>
    <location>
        <position position="1526"/>
    </location>
</feature>
<feature type="sequence variant" id="VAR_041592" description="In dbSNP:rs55724025." evidence="34">
    <original>S</original>
    <variation>N</variation>
    <location>
        <position position="1607"/>
    </location>
</feature>
<feature type="sequence variant" id="VAR_041593" description="In dbSNP:rs55894265." evidence="34">
    <original>N</original>
    <variation>S</variation>
    <location>
        <position position="1612"/>
    </location>
</feature>
<feature type="sequence variant" id="VAR_041594" description="In a lung adenocarcinoma sample; somatic mutation." evidence="34">
    <original>A</original>
    <variation>G</variation>
    <location>
        <position position="2002"/>
    </location>
</feature>
<feature type="sequence variant" id="VAR_041595" description="In dbSNP:rs35134774." evidence="34">
    <original>G</original>
    <variation>A</variation>
    <location>
        <position position="2120"/>
    </location>
</feature>
<feature type="sequence variant" id="VAR_041596" description="In dbSNP:rs28910273." evidence="34">
    <original>Y</original>
    <variation>D</variation>
    <location>
        <position position="2132"/>
    </location>
</feature>
<feature type="sequence variant" id="VAR_067919" description="In FCTCS; dbSNP:rs387906797." evidence="42">
    <original>Q</original>
    <variation>R</variation>
    <location>
        <position position="2144"/>
    </location>
</feature>
<feature type="sequence variant" id="VAR_041597" description="In a lung large cell carcinoma sample; somatic mutation." evidence="34">
    <original>S</original>
    <variation>I</variation>
    <location>
        <position position="2233"/>
    </location>
</feature>
<feature type="sequence variant" id="VAR_041598" description="In dbSNP:rs2229032." evidence="34">
    <original>R</original>
    <variation>Q</variation>
    <location>
        <position position="2425"/>
    </location>
</feature>
<feature type="sequence variant" id="VAR_041599" description="In dbSNP:rs33972295." evidence="34">
    <original>P</original>
    <variation>A</variation>
    <location>
        <position position="2434"/>
    </location>
</feature>
<feature type="sequence variant" id="VAR_041600" description="In a breast pleomorphic lobular carcinoma sample; somatic mutation; dbSNP:rs2108261462." evidence="34">
    <original>E</original>
    <variation>K</variation>
    <location>
        <position position="2438"/>
    </location>
</feature>
<feature type="sequence variant" id="VAR_041601" description="In a breast infiltrating ductal carcinoma sample; somatic mutation." evidence="34">
    <original>E</original>
    <variation>Q</variation>
    <location>
        <position position="2537"/>
    </location>
</feature>
<feature type="mutagenesis site" description="Impaired autophosphorylation, leading to decreased activation of ATR." evidence="40">
    <original>T</original>
    <variation>A</variation>
    <location>
        <position position="1989"/>
    </location>
</feature>
<feature type="mutagenesis site" description="Abolishes kinase activity." evidence="10 16 56">
    <original>K</original>
    <variation>R</variation>
    <location>
        <position position="2327"/>
    </location>
</feature>
<feature type="mutagenesis site" description="Abolishes kinase activity; increases sensitivity to IR and impairs translocation to nuclear foci upon DNA damage." evidence="21 53 56">
    <original>D</original>
    <variation>A</variation>
    <location>
        <position position="2475"/>
    </location>
</feature>
<feature type="mutagenesis site" description="Abolishes kinase activity; reduces cell viability, augments sensitivity to IR and UV." evidence="7 54">
    <original>D</original>
    <variation>E</variation>
    <location>
        <position position="2494"/>
    </location>
</feature>
<feature type="sequence conflict" description="In Ref. 1; CAA70298/AAC50929." evidence="60" ref="1">
    <original>A</original>
    <variation>R</variation>
    <location>
        <position position="92"/>
    </location>
</feature>
<name>ATR_HUMAN</name>
<sequence>MGEHGLELASMIPALRELGSATPEEYNTVVQKPRQILCQFIDRILTDVNVVAVELVKKTDSQPTSVMLLDFIQHIMKSSPLMFVNVSGSHEAKGSCIEFSNWIITRLLRIAATPSCHLLHKKICEVICSLLFLFKSKSPAIFGVLTKELLQLFEDLVYLHRRNVMGHAVEWPVVMSRFLSQLDEHMGYLQSAPLQLMSMQNLEFIEVTLLMVLTRIIAIVFFRRQELLLWQIGCVLLEYGSPKIKSLAISFLTELFQLGGLPAQPASTFFSSFLELLKHLVEMDTDQLKLYEEPLSKLIKTLFPFEAEAYRNIEPVYLNMLLEKLCVMFEDGVLMRLKSDLLKAALCHLLQYFLKFVPAGYESALQVRKVYVRNICKALLDVLGIEVDAEYLLGPLYAALKMESMEIIEEIQCQTQQENLSSNSDGISPKRRRLSSSLNPSKRAPKQTEEIKHVDMNQKSILWSALKQKAESLQISLEYSGLKNPVIEMLEGIAVVLQLTALCTVHCSHQNMNCRTFKDCQHKSKKKPSVVITWMSLDFYTKVLKSCRSLLESVQKLDLEATIDKVVKIYDALIYMQVNSSFEDHILEDLCGMLSLPWIYSHSDDGCLKLTTFAANLLTLSCRISDSYSPQAQSRCVFLLTLFPRRIFLEWRTAVYNWALQSSHEVIRASCVSGFFILLQQQNSCNRVPKILIDKVKDDSDIVKKEFASILGQLVCTLHGMFYLTSSLTEPFSEHGHVDLFCRNLKATSQHECSSSQLKASVCKPFLFLLKKKIPSPVKLAFIDNLHHLCKHLDFREDETDVKAVLGTLLNLMEDPDKDVRVAFSGNIKHILESLDSEDGFIKELFVLRMKEAYTHAQISRNNELKDTLILTTGDIGRAAKGDLVPFALLHLLHCLLSKSASVSGAAYTEIRALVAAKSVKLQSFFSQYKKPICQFLVESLHSSQMTALPNTPCQNADVRKQDVAHQREMALNTLSEIANVFDFPDLNRFLTRTLQVLLPDLAAKASPAASALIRTLGKQLNVNRREILINNFKYIFSHLVCSCSKDELERALHYLKNETEIELGSLLRQDFQGLHNELLLRIGEHYQQVFNGLSILASFASSDDPYQGPRDIISPELMADYLQPKLLGILAFFNMQLLSSSVGIEDKKMALNSLMSLMKLMGPKHVSSVRVKMMTTLRTGLRFKDDFPELCCRAWDCFVRCLDHACLGSLLSHVIVALLPLIHIQPKETAAIFHYLIIENRDAVQDFLHEIYFLPDHPELKKIKAVLQEYRKETSESTDLQTTLQLSMKAIQHENVDVRIHALTSLKETLYKNQEKLIKYATDSETVEPIISQLVTVLLKGCQDANSQARLLCGECLGELGAIDPGRLDFSTTETQGKDFTFVTGVEDSSFAYGLLMELTRAYLAYADNSRAQDSAAYAIQELLSIYDCREMETNGPGHQLWRRFPEHVREILEPHLNTRYKSSQKSTDWSGVKKPIYLSKLGSNFAEWSASWAGYLITKVRHDLASKIFTCCSIMMKHDFKVTIYLLPHILVYVLLGCNQEDQQEVYAEIMAVLKHDDQHTINTQDIASDLCQLSTQTVFSMLDHLTQWARHKFQALKAEKCPHSKSNRNKVDSMVSTVDYEDYQSVTRFLDLIPQDTLAVASFRSKAYTRAVMHFESFITEKKQNIQEHLGFLQKLYAAMHEPDGVAGVSAIRKAEPSLKEQILEHESLGLLRDATACYDRAIQLEPDQIIHYHGVVKSMLGLGQLSTVITQVNGVHANRSEWTDELNTYRVEAAWKLSQWDLVENYLAADGKSTTWSVRLGQLLLSAKKRDITAFYDSLKLVRAEQIVPLSAASFERGSYQRGYEYIVRLHMLCELEHSIKPLFQHSPGDSSQEDSLNWVARLEMTQNSYRAKEPILALRRALLSLNKRPDYNEMVGECWLQSARVARKAGHHQTAYNALLNAGESRLAELYVERAKWLWSKGDVHQALIVLQKGVELCFPENETPPEGKNMLIHGRAMLLVGRFMEETANFESNAIMKKYKDVTACLPEWEDGHFYLAKYYDKLMPMVTDNKMEKQGDLIRYIVLHFGRSLQYGNQFIYQSMPRMLTLWLDYGTKAYEWEKAGRSDRVQMRNDLGKINKVITEHTNYLAPYQFLTAFSQLISRICHSHDEVFVVLMEIIAKVFLAYPQQAMWMMTAVSKSSYPMRVNRCKEILNKAIHMKKSLEKFVGDATRLTDKLLELCNKPVDGSSSTLSMSTHFKMLKKLVEEATFSEILIPLQSVMIPTLPSILGTHANHASHEPFPGHWAYIAGFDDMVEILASLQKPKKISLKGSDGKFYIMMCKPKDDLRKDCRLMEFNSLINKCLRKDAESRRRELHIRTYAVIPLNDECGIIEWVNNTAGLRPILTKLYKEKGVYMTGKELRQCMLPKSAALSEKLKVFREFLLPRHPPIFHEWFLRTFPDPTSWYSSRSAYCRSTAVMSMVGYILGLGDRHGENILFDSLTGECVHVDFNCLFNKGETFEVPEIVPFRLTHNMVNGMGPMGTEGLFRRACEVTMRLMRDQREPLMSVLKTFLHDPLVEWSKPVKGHSKAPLNETGEVVNEKAKTHVLDIEQRLQGVIKTRNRVTGLPLSIEGHVHYLIQEATDENLLCQMYLGWTPYM</sequence>
<dbReference type="EC" id="2.7.11.1" evidence="40 41 45 46"/>
<dbReference type="EMBL" id="Y09077">
    <property type="protein sequence ID" value="CAA70298.1"/>
    <property type="molecule type" value="mRNA"/>
</dbReference>
<dbReference type="EMBL" id="U76308">
    <property type="protein sequence ID" value="AAC50929.1"/>
    <property type="molecule type" value="mRNA"/>
</dbReference>
<dbReference type="EMBL" id="U49844">
    <property type="protein sequence ID" value="AAC50405.1"/>
    <property type="molecule type" value="mRNA"/>
</dbReference>
<dbReference type="EMBL" id="AF325699">
    <property type="protein sequence ID" value="AAK26749.1"/>
    <property type="molecule type" value="Genomic_DNA"/>
</dbReference>
<dbReference type="EMBL" id="AB208847">
    <property type="protein sequence ID" value="BAD92084.1"/>
    <property type="molecule type" value="mRNA"/>
</dbReference>
<dbReference type="CCDS" id="CCDS3124.1">
    <molecule id="Q13535-1"/>
</dbReference>
<dbReference type="CCDS" id="CCDS93402.1">
    <molecule id="Q13535-2"/>
</dbReference>
<dbReference type="RefSeq" id="NP_001175.2">
    <molecule id="Q13535-1"/>
    <property type="nucleotide sequence ID" value="NM_001184.4"/>
</dbReference>
<dbReference type="RefSeq" id="NP_001341508.1">
    <molecule id="Q13535-2"/>
    <property type="nucleotide sequence ID" value="NM_001354579.2"/>
</dbReference>
<dbReference type="RefSeq" id="XP_016862132.1">
    <property type="nucleotide sequence ID" value="XM_017006643.1"/>
</dbReference>
<dbReference type="PDB" id="5YZ0">
    <property type="method" value="EM"/>
    <property type="resolution" value="4.70 A"/>
    <property type="chains" value="A/B=1-2644"/>
</dbReference>
<dbReference type="PDBsum" id="5YZ0"/>
<dbReference type="EMDB" id="EMD-6862"/>
<dbReference type="SMR" id="Q13535"/>
<dbReference type="BioGRID" id="107027">
    <property type="interactions" value="233"/>
</dbReference>
<dbReference type="ComplexPortal" id="CPX-3622">
    <property type="entry name" value="ATR-ATRIP DNA damage-sensing kinase complex"/>
</dbReference>
<dbReference type="CORUM" id="Q13535"/>
<dbReference type="DIP" id="DIP-35308N"/>
<dbReference type="FunCoup" id="Q13535">
    <property type="interactions" value="3607"/>
</dbReference>
<dbReference type="IntAct" id="Q13535">
    <property type="interactions" value="89"/>
</dbReference>
<dbReference type="MINT" id="Q13535"/>
<dbReference type="STRING" id="9606.ENSP00000343741"/>
<dbReference type="BindingDB" id="Q13535"/>
<dbReference type="ChEMBL" id="CHEMBL5024"/>
<dbReference type="DrugBank" id="DB11794">
    <property type="generic name" value="Berzosertib"/>
</dbReference>
<dbReference type="DrugBank" id="DB14917">
    <property type="generic name" value="Ceralasertib"/>
</dbReference>
<dbReference type="DrugBank" id="DB19041">
    <property type="generic name" value="Elimusertib"/>
</dbReference>
<dbReference type="GuidetoPHARMACOLOGY" id="1935"/>
<dbReference type="CarbonylDB" id="Q13535"/>
<dbReference type="GlyGen" id="Q13535">
    <property type="glycosylation" value="3 sites, 1 O-linked glycan (2 sites)"/>
</dbReference>
<dbReference type="iPTMnet" id="Q13535"/>
<dbReference type="PhosphoSitePlus" id="Q13535"/>
<dbReference type="BioMuta" id="ATR"/>
<dbReference type="DMDM" id="62286460"/>
<dbReference type="CPTAC" id="CPTAC-3214"/>
<dbReference type="CPTAC" id="CPTAC-3215"/>
<dbReference type="jPOST" id="Q13535"/>
<dbReference type="MassIVE" id="Q13535"/>
<dbReference type="PaxDb" id="9606-ENSP00000343741"/>
<dbReference type="PeptideAtlas" id="Q13535"/>
<dbReference type="ProteomicsDB" id="59521">
    <molecule id="Q13535-1"/>
</dbReference>
<dbReference type="ProteomicsDB" id="59522">
    <molecule id="Q13535-2"/>
</dbReference>
<dbReference type="ProteomicsDB" id="59523">
    <molecule id="Q13535-3"/>
</dbReference>
<dbReference type="Pumba" id="Q13535"/>
<dbReference type="Antibodypedia" id="18078">
    <property type="antibodies" value="555 antibodies from 41 providers"/>
</dbReference>
<dbReference type="CPTC" id="Q13535">
    <property type="antibodies" value="1 antibody"/>
</dbReference>
<dbReference type="DNASU" id="545"/>
<dbReference type="Ensembl" id="ENST00000350721.9">
    <molecule id="Q13535-1"/>
    <property type="protein sequence ID" value="ENSP00000343741.4"/>
    <property type="gene ID" value="ENSG00000175054.16"/>
</dbReference>
<dbReference type="Ensembl" id="ENST00000661310.1">
    <molecule id="Q13535-2"/>
    <property type="protein sequence ID" value="ENSP00000499589.1"/>
    <property type="gene ID" value="ENSG00000175054.16"/>
</dbReference>
<dbReference type="GeneID" id="545"/>
<dbReference type="KEGG" id="hsa:545"/>
<dbReference type="MANE-Select" id="ENST00000350721.9">
    <property type="protein sequence ID" value="ENSP00000343741.4"/>
    <property type="RefSeq nucleotide sequence ID" value="NM_001184.4"/>
    <property type="RefSeq protein sequence ID" value="NP_001175.2"/>
</dbReference>
<dbReference type="UCSC" id="uc003eux.5">
    <molecule id="Q13535-1"/>
    <property type="organism name" value="human"/>
</dbReference>
<dbReference type="AGR" id="HGNC:882"/>
<dbReference type="CTD" id="545"/>
<dbReference type="DisGeNET" id="545"/>
<dbReference type="GeneCards" id="ATR"/>
<dbReference type="HGNC" id="HGNC:882">
    <property type="gene designation" value="ATR"/>
</dbReference>
<dbReference type="HPA" id="ENSG00000175054">
    <property type="expression patterns" value="Low tissue specificity"/>
</dbReference>
<dbReference type="MalaCards" id="ATR"/>
<dbReference type="MIM" id="210600">
    <property type="type" value="phenotype"/>
</dbReference>
<dbReference type="MIM" id="601215">
    <property type="type" value="gene"/>
</dbReference>
<dbReference type="MIM" id="614564">
    <property type="type" value="phenotype"/>
</dbReference>
<dbReference type="neXtProt" id="NX_Q13535"/>
<dbReference type="OpenTargets" id="ENSG00000175054"/>
<dbReference type="Orphanet" id="313846">
    <property type="disease" value="Familial cutaneous telangiectasia and oropharyngeal cancer predisposition syndrome"/>
</dbReference>
<dbReference type="Orphanet" id="808">
    <property type="disease" value="Seckel syndrome"/>
</dbReference>
<dbReference type="PharmGKB" id="PA74"/>
<dbReference type="VEuPathDB" id="HostDB:ENSG00000175054"/>
<dbReference type="eggNOG" id="KOG0890">
    <property type="taxonomic scope" value="Eukaryota"/>
</dbReference>
<dbReference type="GeneTree" id="ENSGT00940000155714"/>
<dbReference type="HOGENOM" id="CLU_000178_2_1_1"/>
<dbReference type="InParanoid" id="Q13535"/>
<dbReference type="OMA" id="SMYIGWC"/>
<dbReference type="OrthoDB" id="381190at2759"/>
<dbReference type="PAN-GO" id="Q13535">
    <property type="GO annotations" value="5 GO annotations based on evolutionary models"/>
</dbReference>
<dbReference type="PhylomeDB" id="Q13535"/>
<dbReference type="TreeFam" id="TF101183"/>
<dbReference type="BRENDA" id="2.7.11.1">
    <property type="organism ID" value="2681"/>
</dbReference>
<dbReference type="PathwayCommons" id="Q13535"/>
<dbReference type="Reactome" id="R-HSA-1221632">
    <property type="pathway name" value="Meiotic synapsis"/>
</dbReference>
<dbReference type="Reactome" id="R-HSA-176187">
    <property type="pathway name" value="Activation of ATR in response to replication stress"/>
</dbReference>
<dbReference type="Reactome" id="R-HSA-3371453">
    <property type="pathway name" value="Regulation of HSF1-mediated heat shock response"/>
</dbReference>
<dbReference type="Reactome" id="R-HSA-5685938">
    <property type="pathway name" value="HDR through Single Strand Annealing (SSA)"/>
</dbReference>
<dbReference type="Reactome" id="R-HSA-5693607">
    <property type="pathway name" value="Processing of DNA double-strand break ends"/>
</dbReference>
<dbReference type="Reactome" id="R-HSA-5693616">
    <property type="pathway name" value="Presynaptic phase of homologous DNA pairing and strand exchange"/>
</dbReference>
<dbReference type="Reactome" id="R-HSA-6783310">
    <property type="pathway name" value="Fanconi Anemia Pathway"/>
</dbReference>
<dbReference type="Reactome" id="R-HSA-6796648">
    <property type="pathway name" value="TP53 Regulates Transcription of DNA Repair Genes"/>
</dbReference>
<dbReference type="Reactome" id="R-HSA-6804756">
    <property type="pathway name" value="Regulation of TP53 Activity through Phosphorylation"/>
</dbReference>
<dbReference type="Reactome" id="R-HSA-69473">
    <property type="pathway name" value="G2/M DNA damage checkpoint"/>
</dbReference>
<dbReference type="Reactome" id="R-HSA-9709570">
    <property type="pathway name" value="Impaired BRCA2 binding to RAD51"/>
</dbReference>
<dbReference type="SignaLink" id="Q13535"/>
<dbReference type="SIGNOR" id="Q13535"/>
<dbReference type="BioGRID-ORCS" id="545">
    <property type="hits" value="746 hits in 1209 CRISPR screens"/>
</dbReference>
<dbReference type="CD-CODE" id="804901D1">
    <property type="entry name" value="Nuclear speckle"/>
</dbReference>
<dbReference type="CD-CODE" id="91857CE7">
    <property type="entry name" value="Nucleolus"/>
</dbReference>
<dbReference type="CD-CODE" id="A0DCDA94">
    <property type="entry name" value="DNA damage foci"/>
</dbReference>
<dbReference type="CD-CODE" id="B5B9A610">
    <property type="entry name" value="PML body"/>
</dbReference>
<dbReference type="CD-CODE" id="D3B9EAFD">
    <property type="entry name" value="Synthetic Condensate 000362"/>
</dbReference>
<dbReference type="ChiTaRS" id="ATR">
    <property type="organism name" value="human"/>
</dbReference>
<dbReference type="GeneWiki" id="Ataxia_telangiectasia_and_Rad3_related"/>
<dbReference type="GenomeRNAi" id="545"/>
<dbReference type="Pharos" id="Q13535">
    <property type="development level" value="Tchem"/>
</dbReference>
<dbReference type="PRO" id="PR:Q13535"/>
<dbReference type="Proteomes" id="UP000005640">
    <property type="component" value="Chromosome 3"/>
</dbReference>
<dbReference type="RNAct" id="Q13535">
    <property type="molecule type" value="protein"/>
</dbReference>
<dbReference type="Bgee" id="ENSG00000175054">
    <property type="expression patterns" value="Expressed in Brodmann (1909) area 23 and 205 other cell types or tissues"/>
</dbReference>
<dbReference type="ExpressionAtlas" id="Q13535">
    <property type="expression patterns" value="baseline and differential"/>
</dbReference>
<dbReference type="GO" id="GO:0070310">
    <property type="term" value="C:ATR-ATRIP complex"/>
    <property type="evidence" value="ECO:0000353"/>
    <property type="project" value="ComplexPortal"/>
</dbReference>
<dbReference type="GO" id="GO:0005694">
    <property type="term" value="C:chromosome"/>
    <property type="evidence" value="ECO:0000250"/>
    <property type="project" value="UniProtKB"/>
</dbReference>
<dbReference type="GO" id="GO:0005794">
    <property type="term" value="C:Golgi apparatus"/>
    <property type="evidence" value="ECO:0000314"/>
    <property type="project" value="HPA"/>
</dbReference>
<dbReference type="GO" id="GO:0005635">
    <property type="term" value="C:nuclear envelope"/>
    <property type="evidence" value="ECO:0000314"/>
    <property type="project" value="UniProtKB"/>
</dbReference>
<dbReference type="GO" id="GO:0005654">
    <property type="term" value="C:nucleoplasm"/>
    <property type="evidence" value="ECO:0000314"/>
    <property type="project" value="HPA"/>
</dbReference>
<dbReference type="GO" id="GO:0005634">
    <property type="term" value="C:nucleus"/>
    <property type="evidence" value="ECO:0000318"/>
    <property type="project" value="GO_Central"/>
</dbReference>
<dbReference type="GO" id="GO:0016605">
    <property type="term" value="C:PML body"/>
    <property type="evidence" value="ECO:0000314"/>
    <property type="project" value="UniProtKB"/>
</dbReference>
<dbReference type="GO" id="GO:0090734">
    <property type="term" value="C:site of DNA damage"/>
    <property type="evidence" value="ECO:0000314"/>
    <property type="project" value="UniProtKB"/>
</dbReference>
<dbReference type="GO" id="GO:0005524">
    <property type="term" value="F:ATP binding"/>
    <property type="evidence" value="ECO:0007669"/>
    <property type="project" value="UniProtKB-KW"/>
</dbReference>
<dbReference type="GO" id="GO:0003677">
    <property type="term" value="F:DNA binding"/>
    <property type="evidence" value="ECO:0007669"/>
    <property type="project" value="UniProtKB-KW"/>
</dbReference>
<dbReference type="GO" id="GO:0035979">
    <property type="term" value="F:histone H2AXS139 kinase activity"/>
    <property type="evidence" value="ECO:0000314"/>
    <property type="project" value="UniProtKB"/>
</dbReference>
<dbReference type="GO" id="GO:0032405">
    <property type="term" value="F:MutLalpha complex binding"/>
    <property type="evidence" value="ECO:0000314"/>
    <property type="project" value="MGI"/>
</dbReference>
<dbReference type="GO" id="GO:0032407">
    <property type="term" value="F:MutSalpha complex binding"/>
    <property type="evidence" value="ECO:0000314"/>
    <property type="project" value="MGI"/>
</dbReference>
<dbReference type="GO" id="GO:0004672">
    <property type="term" value="F:protein kinase activity"/>
    <property type="evidence" value="ECO:0000314"/>
    <property type="project" value="UniProtKB"/>
</dbReference>
<dbReference type="GO" id="GO:0106310">
    <property type="term" value="F:protein serine kinase activity"/>
    <property type="evidence" value="ECO:0007669"/>
    <property type="project" value="RHEA"/>
</dbReference>
<dbReference type="GO" id="GO:0004674">
    <property type="term" value="F:protein serine/threonine kinase activity"/>
    <property type="evidence" value="ECO:0000314"/>
    <property type="project" value="UniProtKB"/>
</dbReference>
<dbReference type="GO" id="GO:0071480">
    <property type="term" value="P:cellular response to gamma radiation"/>
    <property type="evidence" value="ECO:0000314"/>
    <property type="project" value="BHF-UCL"/>
</dbReference>
<dbReference type="GO" id="GO:0034644">
    <property type="term" value="P:cellular response to UV"/>
    <property type="evidence" value="ECO:0000315"/>
    <property type="project" value="BHF-UCL"/>
</dbReference>
<dbReference type="GO" id="GO:0000077">
    <property type="term" value="P:DNA damage checkpoint signaling"/>
    <property type="evidence" value="ECO:0000314"/>
    <property type="project" value="UniProtKB"/>
</dbReference>
<dbReference type="GO" id="GO:0006974">
    <property type="term" value="P:DNA damage response"/>
    <property type="evidence" value="ECO:0000314"/>
    <property type="project" value="UniProtKB"/>
</dbReference>
<dbReference type="GO" id="GO:0006281">
    <property type="term" value="P:DNA repair"/>
    <property type="evidence" value="ECO:0000318"/>
    <property type="project" value="GO_Central"/>
</dbReference>
<dbReference type="GO" id="GO:0006260">
    <property type="term" value="P:DNA replication"/>
    <property type="evidence" value="ECO:0000304"/>
    <property type="project" value="Reactome"/>
</dbReference>
<dbReference type="GO" id="GO:0006302">
    <property type="term" value="P:double-strand break repair"/>
    <property type="evidence" value="ECO:0000314"/>
    <property type="project" value="UniProt"/>
</dbReference>
<dbReference type="GO" id="GO:0097695">
    <property type="term" value="P:establishment of protein-containing complex localization to telomere"/>
    <property type="evidence" value="ECO:0000305"/>
    <property type="project" value="BHF-UCL"/>
</dbReference>
<dbReference type="GO" id="GO:0097694">
    <property type="term" value="P:establishment of RNA localization to telomere"/>
    <property type="evidence" value="ECO:0000315"/>
    <property type="project" value="BHF-UCL"/>
</dbReference>
<dbReference type="GO" id="GO:0036297">
    <property type="term" value="P:interstrand cross-link repair"/>
    <property type="evidence" value="ECO:0000304"/>
    <property type="project" value="Reactome"/>
</dbReference>
<dbReference type="GO" id="GO:0044818">
    <property type="term" value="P:mitotic G2/M transition checkpoint"/>
    <property type="evidence" value="ECO:0000314"/>
    <property type="project" value="UniProt"/>
</dbReference>
<dbReference type="GO" id="GO:0008156">
    <property type="term" value="P:negative regulation of DNA replication"/>
    <property type="evidence" value="ECO:0000315"/>
    <property type="project" value="UniProtKB"/>
</dbReference>
<dbReference type="GO" id="GO:0051081">
    <property type="term" value="P:nuclear membrane disassembly"/>
    <property type="evidence" value="ECO:0000314"/>
    <property type="project" value="UniProtKB"/>
</dbReference>
<dbReference type="GO" id="GO:0006139">
    <property type="term" value="P:nucleobase-containing compound metabolic process"/>
    <property type="evidence" value="ECO:0000303"/>
    <property type="project" value="ComplexPortal"/>
</dbReference>
<dbReference type="GO" id="GO:0043517">
    <property type="term" value="P:positive regulation of DNA damage response, signal transduction by p53 class mediator"/>
    <property type="evidence" value="ECO:0000314"/>
    <property type="project" value="BHF-UCL"/>
</dbReference>
<dbReference type="GO" id="GO:1904884">
    <property type="term" value="P:positive regulation of telomerase catalytic core complex assembly"/>
    <property type="evidence" value="ECO:0000315"/>
    <property type="project" value="BHF-UCL"/>
</dbReference>
<dbReference type="GO" id="GO:0032212">
    <property type="term" value="P:positive regulation of telomere maintenance via telomerase"/>
    <property type="evidence" value="ECO:0000250"/>
    <property type="project" value="BHF-UCL"/>
</dbReference>
<dbReference type="GO" id="GO:0070198">
    <property type="term" value="P:protein localization to chromosome, telomeric region"/>
    <property type="evidence" value="ECO:0000315"/>
    <property type="project" value="BHF-UCL"/>
</dbReference>
<dbReference type="GO" id="GO:1900034">
    <property type="term" value="P:regulation of cellular response to heat"/>
    <property type="evidence" value="ECO:0000304"/>
    <property type="project" value="Reactome"/>
</dbReference>
<dbReference type="GO" id="GO:2000779">
    <property type="term" value="P:regulation of double-strand break repair"/>
    <property type="evidence" value="ECO:0000303"/>
    <property type="project" value="ComplexPortal"/>
</dbReference>
<dbReference type="GO" id="GO:0031297">
    <property type="term" value="P:replication fork processing"/>
    <property type="evidence" value="ECO:0000250"/>
    <property type="project" value="UniProtKB"/>
</dbReference>
<dbReference type="GO" id="GO:0090399">
    <property type="term" value="P:replicative senescence"/>
    <property type="evidence" value="ECO:0000315"/>
    <property type="project" value="BHF-UCL"/>
</dbReference>
<dbReference type="GO" id="GO:0046685">
    <property type="term" value="P:response to arsenic-containing substance"/>
    <property type="evidence" value="ECO:0007669"/>
    <property type="project" value="Ensembl"/>
</dbReference>
<dbReference type="GO" id="GO:0009612">
    <property type="term" value="P:response to mechanical stimulus"/>
    <property type="evidence" value="ECO:0000314"/>
    <property type="project" value="UniProtKB"/>
</dbReference>
<dbReference type="GO" id="GO:0009410">
    <property type="term" value="P:response to xenobiotic stimulus"/>
    <property type="evidence" value="ECO:0007669"/>
    <property type="project" value="Ensembl"/>
</dbReference>
<dbReference type="GO" id="GO:0000723">
    <property type="term" value="P:telomere maintenance"/>
    <property type="evidence" value="ECO:0000318"/>
    <property type="project" value="GO_Central"/>
</dbReference>
<dbReference type="CDD" id="cd00892">
    <property type="entry name" value="PIKKc_ATR"/>
    <property type="match status" value="1"/>
</dbReference>
<dbReference type="FunFam" id="1.10.1070.11:FF:000009">
    <property type="entry name" value="Putative serine/threonine-protein kinase ATR"/>
    <property type="match status" value="1"/>
</dbReference>
<dbReference type="FunFam" id="1.25.10.10:FF:000149">
    <property type="entry name" value="Serine/threonine-protein kinase ATR"/>
    <property type="match status" value="1"/>
</dbReference>
<dbReference type="FunFam" id="1.25.40.10:FF:000142">
    <property type="entry name" value="Serine/threonine-protein kinase ATR"/>
    <property type="match status" value="1"/>
</dbReference>
<dbReference type="FunFam" id="3.30.1010.10:FF:000011">
    <property type="entry name" value="serine/threonine-protein kinase ATR"/>
    <property type="match status" value="1"/>
</dbReference>
<dbReference type="Gene3D" id="1.25.10.10">
    <property type="entry name" value="Leucine-rich Repeat Variant"/>
    <property type="match status" value="2"/>
</dbReference>
<dbReference type="Gene3D" id="1.10.1070.11">
    <property type="entry name" value="Phosphatidylinositol 3-/4-kinase, catalytic domain"/>
    <property type="match status" value="1"/>
</dbReference>
<dbReference type="Gene3D" id="3.30.1010.10">
    <property type="entry name" value="Phosphatidylinositol 3-kinase Catalytic Subunit, Chain A, domain 4"/>
    <property type="match status" value="1"/>
</dbReference>
<dbReference type="Gene3D" id="1.25.40.10">
    <property type="entry name" value="Tetratricopeptide repeat domain"/>
    <property type="match status" value="1"/>
</dbReference>
<dbReference type="InterPro" id="IPR011989">
    <property type="entry name" value="ARM-like"/>
</dbReference>
<dbReference type="InterPro" id="IPR016024">
    <property type="entry name" value="ARM-type_fold"/>
</dbReference>
<dbReference type="InterPro" id="IPR056802">
    <property type="entry name" value="ATR-like_M-HEAT"/>
</dbReference>
<dbReference type="InterPro" id="IPR056803">
    <property type="entry name" value="ATR-like_N-HEAT"/>
</dbReference>
<dbReference type="InterPro" id="IPR050517">
    <property type="entry name" value="DDR_Repair_Kinase"/>
</dbReference>
<dbReference type="InterPro" id="IPR003152">
    <property type="entry name" value="FATC_dom"/>
</dbReference>
<dbReference type="InterPro" id="IPR021133">
    <property type="entry name" value="HEAT_type_2"/>
</dbReference>
<dbReference type="InterPro" id="IPR011009">
    <property type="entry name" value="Kinase-like_dom_sf"/>
</dbReference>
<dbReference type="InterPro" id="IPR000403">
    <property type="entry name" value="PI3/4_kinase_cat_dom"/>
</dbReference>
<dbReference type="InterPro" id="IPR036940">
    <property type="entry name" value="PI3/4_kinase_cat_sf"/>
</dbReference>
<dbReference type="InterPro" id="IPR018936">
    <property type="entry name" value="PI3/4_kinase_CS"/>
</dbReference>
<dbReference type="InterPro" id="IPR003151">
    <property type="entry name" value="PIK-rel_kinase_FAT"/>
</dbReference>
<dbReference type="InterPro" id="IPR014009">
    <property type="entry name" value="PIK_FAT"/>
</dbReference>
<dbReference type="InterPro" id="IPR011990">
    <property type="entry name" value="TPR-like_helical_dom_sf"/>
</dbReference>
<dbReference type="InterPro" id="IPR012993">
    <property type="entry name" value="UME"/>
</dbReference>
<dbReference type="PANTHER" id="PTHR11139">
    <property type="entry name" value="ATAXIA TELANGIECTASIA MUTATED ATM -RELATED"/>
    <property type="match status" value="1"/>
</dbReference>
<dbReference type="PANTHER" id="PTHR11139:SF69">
    <property type="entry name" value="SERINE_THREONINE-PROTEIN KINASE ATR"/>
    <property type="match status" value="1"/>
</dbReference>
<dbReference type="Pfam" id="PF02259">
    <property type="entry name" value="FAT"/>
    <property type="match status" value="1"/>
</dbReference>
<dbReference type="Pfam" id="PF02260">
    <property type="entry name" value="FATC"/>
    <property type="match status" value="1"/>
</dbReference>
<dbReference type="Pfam" id="PF23593">
    <property type="entry name" value="HEAT_ATR"/>
    <property type="match status" value="1"/>
</dbReference>
<dbReference type="Pfam" id="PF25030">
    <property type="entry name" value="M-HEAT_ATR"/>
    <property type="match status" value="1"/>
</dbReference>
<dbReference type="Pfam" id="PF25032">
    <property type="entry name" value="N-HEAT_ATR"/>
    <property type="match status" value="1"/>
</dbReference>
<dbReference type="Pfam" id="PF00454">
    <property type="entry name" value="PI3_PI4_kinase"/>
    <property type="match status" value="1"/>
</dbReference>
<dbReference type="Pfam" id="PF08064">
    <property type="entry name" value="UME"/>
    <property type="match status" value="1"/>
</dbReference>
<dbReference type="SMART" id="SM01343">
    <property type="entry name" value="FATC"/>
    <property type="match status" value="1"/>
</dbReference>
<dbReference type="SMART" id="SM00146">
    <property type="entry name" value="PI3Kc"/>
    <property type="match status" value="1"/>
</dbReference>
<dbReference type="SMART" id="SM00802">
    <property type="entry name" value="UME"/>
    <property type="match status" value="1"/>
</dbReference>
<dbReference type="SUPFAM" id="SSF48371">
    <property type="entry name" value="ARM repeat"/>
    <property type="match status" value="2"/>
</dbReference>
<dbReference type="SUPFAM" id="SSF56112">
    <property type="entry name" value="Protein kinase-like (PK-like)"/>
    <property type="match status" value="1"/>
</dbReference>
<dbReference type="SUPFAM" id="SSF48452">
    <property type="entry name" value="TPR-like"/>
    <property type="match status" value="1"/>
</dbReference>
<dbReference type="PROSITE" id="PS51189">
    <property type="entry name" value="FAT"/>
    <property type="match status" value="1"/>
</dbReference>
<dbReference type="PROSITE" id="PS51190">
    <property type="entry name" value="FATC"/>
    <property type="match status" value="1"/>
</dbReference>
<dbReference type="PROSITE" id="PS50077">
    <property type="entry name" value="HEAT_REPEAT"/>
    <property type="match status" value="1"/>
</dbReference>
<dbReference type="PROSITE" id="PS00916">
    <property type="entry name" value="PI3_4_KINASE_2"/>
    <property type="match status" value="1"/>
</dbReference>
<dbReference type="PROSITE" id="PS50290">
    <property type="entry name" value="PI3_4_KINASE_3"/>
    <property type="match status" value="1"/>
</dbReference>
<organism>
    <name type="scientific">Homo sapiens</name>
    <name type="common">Human</name>
    <dbReference type="NCBI Taxonomy" id="9606"/>
    <lineage>
        <taxon>Eukaryota</taxon>
        <taxon>Metazoa</taxon>
        <taxon>Chordata</taxon>
        <taxon>Craniata</taxon>
        <taxon>Vertebrata</taxon>
        <taxon>Euteleostomi</taxon>
        <taxon>Mammalia</taxon>
        <taxon>Eutheria</taxon>
        <taxon>Euarchontoglires</taxon>
        <taxon>Primates</taxon>
        <taxon>Haplorrhini</taxon>
        <taxon>Catarrhini</taxon>
        <taxon>Hominidae</taxon>
        <taxon>Homo</taxon>
    </lineage>
</organism>
<reference key="1">
    <citation type="journal article" date="1996" name="EMBO J.">
        <title>The Schizosaccharomyces pombe rad3 checkpoint gene.</title>
        <authorList>
            <person name="Bentley N.J."/>
            <person name="Holtzman D.A."/>
            <person name="Flaggs G."/>
            <person name="Keegan K.S."/>
            <person name="DeMaggio A."/>
            <person name="Ford J.C."/>
            <person name="Hoekstra M."/>
            <person name="Carr A.M."/>
        </authorList>
    </citation>
    <scope>NUCLEOTIDE SEQUENCE [MRNA] (ISOFORM 1)</scope>
</reference>
<reference key="2">
    <citation type="journal article" date="1996" name="Proc. Natl. Acad. Sci. U.S.A.">
        <title>cDNA cloning and gene mapping of a candidate human cell cycle checkpoint protein.</title>
        <authorList>
            <person name="Cimprich K.A."/>
            <person name="Shin T.B."/>
            <person name="Keith C.T."/>
            <person name="Schreiber S.L."/>
        </authorList>
    </citation>
    <scope>NUCLEOTIDE SEQUENCE [MRNA] (ISOFORM 1)</scope>
    <scope>TISSUE SPECIFICITY</scope>
    <source>
        <tissue>T-cell</tissue>
    </source>
</reference>
<reference key="3">
    <citation type="journal article" date="2001" name="Gene">
        <title>Evidence for alternate splicing within the mRNA transcript encoding the DNA damage response kinase ATR.</title>
        <authorList>
            <person name="Mannino J.L."/>
            <person name="Kim W.-J."/>
            <person name="Wernick M."/>
            <person name="Nguyen S.V."/>
            <person name="Braquet R."/>
            <person name="Adamson A.W."/>
            <person name="Den Z."/>
            <person name="Batzer M.A."/>
            <person name="Collins C.C."/>
            <person name="Brown K.D."/>
        </authorList>
    </citation>
    <scope>NUCLEOTIDE SEQUENCE [GENOMIC DNA / MRNA] OF 433-526 (ISOFORMS 1 AND 2)</scope>
    <scope>TISSUE SPECIFICITY</scope>
</reference>
<reference key="4">
    <citation type="submission" date="2005-03" db="EMBL/GenBank/DDBJ databases">
        <authorList>
            <person name="Totoki Y."/>
            <person name="Toyoda A."/>
            <person name="Takeda T."/>
            <person name="Sakaki Y."/>
            <person name="Tanaka A."/>
            <person name="Yokoyama S."/>
            <person name="Ohara O."/>
            <person name="Nagase T."/>
            <person name="Kikuno R.F."/>
        </authorList>
    </citation>
    <scope>NUCLEOTIDE SEQUENCE [LARGE SCALE MRNA] OF 2155-2644 (ISOFORM 3)</scope>
    <source>
        <tissue>Brain</tissue>
    </source>
</reference>
<reference key="5">
    <citation type="journal article" date="1996" name="Genes Dev.">
        <title>The Atr and Atm protein kinases associate with different sites along meiotically pairing chromosomes.</title>
        <authorList>
            <person name="Keegan K.S."/>
            <person name="Holtzman D.A."/>
            <person name="Plug A.W."/>
            <person name="Christenson E.R."/>
            <person name="Brainerd E.E."/>
            <person name="Flaggs G."/>
            <person name="Bentley N.J."/>
            <person name="Taylor E.M."/>
            <person name="Meyn M.S."/>
            <person name="Moss S.B."/>
            <person name="Carr A.M."/>
            <person name="Ashley T."/>
            <person name="Hoekstra M.F."/>
        </authorList>
    </citation>
    <scope>SUBCELLULAR LOCATION</scope>
    <scope>TISSUE SPECIFICITY</scope>
</reference>
<reference key="6">
    <citation type="journal article" date="1998" name="Cancer Res.">
        <title>Inhibition of phosphoinositide 3-kinase related kinases by the radiosensitizing agent wortmannin.</title>
        <authorList>
            <person name="Sarkaria J.N."/>
            <person name="Tibbetts R.S."/>
            <person name="Busby E.C."/>
            <person name="Kennedy A.P."/>
            <person name="Hill D.E."/>
            <person name="Abraham R.T."/>
        </authorList>
    </citation>
    <scope>ACTIVITY REGULATION</scope>
</reference>
<reference key="7">
    <citation type="journal article" date="1998" name="EMBO J.">
        <title>Overexpression of a kinase-inactive ATR protein causes sensitivity to DNA-damaging agents and defects in cell cycle checkpoints.</title>
        <authorList>
            <person name="Cliby W.A."/>
            <person name="Roberts C.J."/>
            <person name="Cimprich K.A."/>
            <person name="Stringer C.M."/>
            <person name="Lamb J.R."/>
            <person name="Schreiber S.L."/>
            <person name="Friend S.H."/>
        </authorList>
    </citation>
    <scope>FUNCTION</scope>
    <scope>AUTOPHOSPHORYLATION</scope>
    <scope>MUTAGENESIS OF ASP-2475</scope>
</reference>
<reference key="8">
    <citation type="journal article" date="1998" name="Proc. Natl. Acad. Sci. U.S.A.">
        <title>Protein kinase mutants of human ATR increase sensitivity to UV and ionizing radiation and abrogate cell cycle checkpoint control.</title>
        <authorList>
            <person name="Wright J.A."/>
            <person name="Keegan K.S."/>
            <person name="Herendeen D.R."/>
            <person name="Bentley N.J."/>
            <person name="Carr A.M."/>
            <person name="Hoekstra M.F."/>
            <person name="Concannon P."/>
        </authorList>
    </citation>
    <scope>FUNCTION</scope>
    <scope>MUTAGENESIS OF ASP-2494</scope>
</reference>
<reference key="9">
    <citation type="journal article" date="1999" name="Biochemistry">
        <title>Molecular association between ATR and two components of the nucleosome remodeling and deacetylating complex, HDAC2 and CHD4.</title>
        <authorList>
            <person name="Schmidt D.R."/>
            <person name="Schreiber S.L."/>
        </authorList>
    </citation>
    <scope>INTERACTION WITH HDAC2</scope>
    <scope>IDENTIFICATION IN A COMPLEX CONTAINING HDAC2 AND CHD4</scope>
</reference>
<reference key="10">
    <citation type="journal article" date="1999" name="Genes Dev.">
        <title>A role for ATR in the DNA damage-induced phosphorylation of p53.</title>
        <authorList>
            <person name="Tibbetts R.S."/>
            <person name="Brumbaugh K.M."/>
            <person name="Williams J.M."/>
            <person name="Sarkaria J.N."/>
            <person name="Cliby W.A."/>
            <person name="Shieh S.-Y."/>
            <person name="Taya Y."/>
            <person name="Prives C."/>
            <person name="Abraham R.T."/>
        </authorList>
    </citation>
    <scope>FUNCTION</scope>
    <scope>MUTAGENESIS OF LYS-2327 AND ASP-2475</scope>
</reference>
<reference key="11">
    <citation type="journal article" date="1999" name="J. Biol. Chem.">
        <title>Substrate specificities and identification of putative substrates of ATM kinase family members.</title>
        <authorList>
            <person name="Kim S.-T."/>
            <person name="Lim D.-S."/>
            <person name="Canman C.E."/>
            <person name="Kastan M.B."/>
        </authorList>
    </citation>
    <scope>COFACTOR</scope>
    <scope>FUNCTION</scope>
</reference>
<reference key="12">
    <citation type="journal article" date="1999" name="Oncogene">
        <title>ATR is a caffeine-sensitive, DNA-activated protein kinase with a substrate specificity distinct from DNA-PK.</title>
        <authorList>
            <person name="Hall-Jackson C.A."/>
            <person name="Cross D.A.E."/>
            <person name="Morrice N."/>
            <person name="Smythe C."/>
        </authorList>
    </citation>
    <scope>FUNCTION</scope>
    <scope>AUTOPHOSPHORYLATION</scope>
    <scope>MUTAGENESIS OF ASP-2494</scope>
    <scope>ACTIVITY REGULATION</scope>
</reference>
<reference key="13">
    <citation type="journal article" date="2000" name="Genes Dev.">
        <title>Chk1 is an essential kinase that is regulated by Atr and required for the G(2)/M DNA damage checkpoint.</title>
        <authorList>
            <person name="Liu Q."/>
            <person name="Guntuku S."/>
            <person name="Cui X.-S."/>
            <person name="Matsuoka S."/>
            <person name="Cortez D."/>
            <person name="Tamai K."/>
            <person name="Luo G."/>
            <person name="Carattini-Rivera S."/>
            <person name="DeMayo F."/>
            <person name="Bradley A."/>
            <person name="Donehower L.A."/>
            <person name="Elledge S.J."/>
        </authorList>
    </citation>
    <scope>FUNCTION</scope>
</reference>
<reference key="14">
    <citation type="journal article" date="2000" name="Genes Dev.">
        <title>Functional interactions between BRCA1 and the checkpoint kinase ATR during genotoxic stress.</title>
        <authorList>
            <person name="Tibbetts R.S."/>
            <person name="Cortez D."/>
            <person name="Brumbaugh K.M."/>
            <person name="Scully R."/>
            <person name="Livingston D."/>
            <person name="Elledge S.J."/>
            <person name="Abraham R.T."/>
        </authorList>
    </citation>
    <scope>FUNCTION</scope>
    <scope>SUBCELLULAR LOCATION</scope>
    <scope>MUTAGENESIS OF LYS-2327</scope>
</reference>
<reference key="15">
    <citation type="journal article" date="2001" name="J. Biol. Chem.">
        <title>Histone H2AX is phosphorylated in an ATR-dependent manner in response to replicational stress.</title>
        <authorList>
            <person name="Ward I.M."/>
            <person name="Chen J."/>
        </authorList>
    </citation>
    <scope>FUNCTION</scope>
    <scope>SUBCELLULAR LOCATION</scope>
</reference>
<reference key="16">
    <citation type="journal article" date="2001" name="Nature">
        <title>ATR/ATM-mediated phosphorylation of human Rad17 is required for genotoxic stress responses.</title>
        <authorList>
            <person name="Bao S."/>
            <person name="Tibbetts R.S."/>
            <person name="Brumbaugh K.M."/>
            <person name="Fang Y."/>
            <person name="Richardson D.A."/>
            <person name="Ali A."/>
            <person name="Chen S.M."/>
            <person name="Abraham R.T."/>
            <person name="Wang X.-F."/>
        </authorList>
    </citation>
    <scope>FUNCTION</scope>
</reference>
<reference key="17">
    <citation type="journal article" date="2001" name="Science">
        <title>ATR and ATRIP: partners in checkpoint signaling.</title>
        <authorList>
            <person name="Cortez D."/>
            <person name="Guntuku S."/>
            <person name="Qin J."/>
            <person name="Elledge S.J."/>
        </authorList>
    </citation>
    <scope>FUNCTION</scope>
    <scope>SUBCELLULAR LOCATION</scope>
    <scope>INTERACTION WITH ATRIP</scope>
</reference>
<reference key="18">
    <citation type="journal article" date="2002" name="Cell">
        <title>ATR regulates fragile site stability.</title>
        <authorList>
            <person name="Casper A.M."/>
            <person name="Nghiem P."/>
            <person name="Arlt M.F."/>
            <person name="Glover T.W."/>
        </authorList>
    </citation>
    <scope>FUNCTION</scope>
</reference>
<reference key="19">
    <citation type="journal article" date="2002" name="Mol. Cell. Biol.">
        <title>Hypoxia links ATR and p53 through replication arrest.</title>
        <authorList>
            <person name="Hammond E.M."/>
            <person name="Denko N.C."/>
            <person name="Dorie M.J."/>
            <person name="Abraham R.T."/>
            <person name="Giaccia A.J."/>
        </authorList>
    </citation>
    <scope>FUNCTION</scope>
    <scope>SUBCELLULAR LOCATION</scope>
</reference>
<reference key="20">
    <citation type="journal article" date="2002" name="Proc. Natl. Acad. Sci. U.S.A.">
        <title>Preferential binding of ATR protein to UV-damaged DNA.</title>
        <authorList>
            <person name="Uensal-Kacmaz K."/>
            <person name="Makhov A.M."/>
            <person name="Griffith J.D."/>
            <person name="Sancar A."/>
        </authorList>
    </citation>
    <scope>DNA-BINDING</scope>
    <scope>MUTAGENESIS OF LYS-2327</scope>
</reference>
<reference key="21">
    <citation type="journal article" date="2003" name="Curr. Biol.">
        <title>ATR kinase activity regulates the intranuclear translocation of ATR and RPA following ionizing radiation.</title>
        <authorList>
            <person name="Barr S.M."/>
            <person name="Leung C.G."/>
            <person name="Chang E.E."/>
            <person name="Cimprich K.A."/>
        </authorList>
    </citation>
    <scope>FUNCTION</scope>
    <scope>SUBCELLULAR LOCATION</scope>
    <scope>MUTAGENESIS OF ASP-2475</scope>
</reference>
<reference key="22">
    <citation type="journal article" date="2003" name="J. Biol. Chem.">
        <title>Human claspin is required for replication checkpoint control.</title>
        <authorList>
            <person name="Chini C.C.S."/>
            <person name="Chen J."/>
        </authorList>
    </citation>
    <scope>INTERACTION WITH CLSPN</scope>
</reference>
<reference key="23">
    <citation type="journal article" date="2003" name="Proc. Natl. Acad. Sci. U.S.A.">
        <title>MSH2 and ATR form a signaling module and regulate two branches of the damage response to DNA methylation.</title>
        <authorList>
            <person name="Wang Y."/>
            <person name="Qin J."/>
        </authorList>
    </citation>
    <scope>FUNCTION</scope>
    <scope>INTERACTION WITH MSH2</scope>
    <scope>IDENTIFICATION BY MASS SPECTROMETRY</scope>
</reference>
<reference key="24">
    <citation type="journal article" date="2003" name="Science">
        <title>Sensing DNA damage through ATRIP recognition of RPA-ssDNA complexes.</title>
        <authorList>
            <person name="Zou L."/>
            <person name="Elledge S.J."/>
        </authorList>
    </citation>
    <scope>FUNCTION</scope>
    <scope>DNA-BINDING</scope>
    <scope>IDENTIFICATION IN A COMPLEX WITH RPA AND ATRIP</scope>
</reference>
<reference key="25">
    <citation type="journal article" date="2004" name="Cancer Cell">
        <title>BCR/ABL translocates to the nucleus and disrupts an ATR-dependent intra-S phase checkpoint.</title>
        <authorList>
            <person name="Dierov J."/>
            <person name="Dierova R."/>
            <person name="Carroll M."/>
        </authorList>
    </citation>
    <scope>INTERACTION WITH BCR-ABL</scope>
</reference>
<reference key="26">
    <citation type="journal article" date="2004" name="J. Biol. Chem.">
        <title>UV-induced ataxia-telangiectasia-mutated and Rad3-related (ATR) activation requires replication stress.</title>
        <authorList>
            <person name="Ward I.M."/>
            <person name="Minn K."/>
            <person name="Chen J."/>
        </authorList>
    </citation>
    <scope>FUNCTION</scope>
</reference>
<reference key="27">
    <citation type="journal article" date="2004" name="J. Biol. Chem.">
        <title>Recruitment of the cell cycle checkpoint kinase ATR to chromatin during S-phase.</title>
        <authorList>
            <person name="Dart D.A."/>
            <person name="Adams K.E."/>
            <person name="Akerman I."/>
            <person name="Lakin N.D."/>
        </authorList>
    </citation>
    <scope>DNA-BINDING</scope>
    <scope>SUBCELLULAR LOCATION</scope>
</reference>
<reference key="28">
    <citation type="journal article" date="2004" name="Genes Dev.">
        <title>ATR couples FANCD2 monoubiquitination to the DNA-damage response.</title>
        <authorList>
            <person name="Andreassen P.R."/>
            <person name="D'Andrea A.D."/>
            <person name="Taniguchi T."/>
        </authorList>
    </citation>
    <scope>FUNCTION</scope>
</reference>
<reference key="29">
    <citation type="journal article" date="2004" name="Hum. Mol. Genet.">
        <title>Seckel syndrome exhibits cellular features demonstrating defects in the ATR-signalling pathway.</title>
        <authorList>
            <person name="Alderton G.K."/>
            <person name="Joenje H."/>
            <person name="Varon R."/>
            <person name="Borglum A.D."/>
            <person name="Jeggo P.A."/>
            <person name="O'Driscoll M."/>
        </authorList>
    </citation>
    <scope>FUNCTION</scope>
</reference>
<reference key="30">
    <citation type="journal article" date="2004" name="Mol. Cell. Biol.">
        <title>Quaternary structure of ATR and effects of ATRIP and replication protein A on its DNA binding and kinase activities.</title>
        <authorList>
            <person name="Uensal-Kacmaz K."/>
            <person name="Sancar A."/>
        </authorList>
    </citation>
    <scope>FUNCTION</scope>
    <scope>SUBUNIT</scope>
    <scope>IDENTIFICATION IN A COMPLEX WITH ATRIP AND RPA1</scope>
    <scope>DNA-BINDING</scope>
    <scope>ACTIVITY REGULATION</scope>
</reference>
<reference key="31">
    <citation type="journal article" date="2004" name="Proc. Natl. Acad. Sci. U.S.A.">
        <title>Minichromosome maintenance proteins are direct targets of the ATM and ATR checkpoint kinases.</title>
        <authorList>
            <person name="Cortez D."/>
            <person name="Glick G."/>
            <person name="Elledge S.J."/>
        </authorList>
    </citation>
    <scope>FUNCTION</scope>
</reference>
<reference key="32">
    <citation type="journal article" date="2005" name="Cell">
        <title>The haploinsufficient tumor suppressor p18 upregulates p53 via interactions with ATM/ATR.</title>
        <authorList>
            <person name="Park B.-J."/>
            <person name="Kang J.W."/>
            <person name="Lee S.W."/>
            <person name="Choi S.-J."/>
            <person name="Shin Y.K."/>
            <person name="Ahn Y.H."/>
            <person name="Choi Y.H."/>
            <person name="Choi D."/>
            <person name="Lee K.S."/>
            <person name="Kim S."/>
        </authorList>
    </citation>
    <scope>INTERACTION WITH EEF1E1</scope>
</reference>
<reference key="33">
    <citation type="journal article" date="2005" name="Nature">
        <title>Conserved modes of recruitment of ATM, ATR and DNA-PKcs to sites of DNA damage.</title>
        <authorList>
            <person name="Falck J."/>
            <person name="Coates J."/>
            <person name="Jackson S.P."/>
        </authorList>
    </citation>
    <scope>INTERACTION WITH ATRIP</scope>
</reference>
<reference key="34">
    <citation type="journal article" date="2006" name="Cell">
        <title>TopBP1 activates the ATR-ATRIP complex.</title>
        <authorList>
            <person name="Kumagai A."/>
            <person name="Lee J."/>
            <person name="Yoo H.Y."/>
            <person name="Dunphy W.G."/>
        </authorList>
    </citation>
    <scope>ACTIVITY REGULATION</scope>
</reference>
<reference key="35">
    <citation type="journal article" date="2008" name="Genes Dev.">
        <title>Cep164 is a mediator protein required for the maintenance of genomic stability through modulation of MDC1, RPA, and CHK1.</title>
        <authorList>
            <person name="Sivasubramaniam S."/>
            <person name="Sun X."/>
            <person name="Pan Y.R."/>
            <person name="Wang S."/>
            <person name="Lee E.Y."/>
        </authorList>
    </citation>
    <scope>INTERACTION WITH CEP164</scope>
    <scope>SUBCELLULAR LOCATION</scope>
</reference>
<reference key="36">
    <citation type="journal article" date="2003" name="Nat. Genet.">
        <title>A splicing mutation affecting expression of ataxia-telangiectasia and Rad3-related protein (ATR) results in Seckel syndrome.</title>
        <authorList>
            <person name="O'Driscoll M."/>
            <person name="Ruiz-Perez V.L."/>
            <person name="Woods C.G."/>
            <person name="Jeggo P.A."/>
            <person name="Goodship J.A."/>
        </authorList>
    </citation>
    <scope>INVOLVEMENT IN SCKL1</scope>
</reference>
<reference key="37">
    <citation type="journal article" date="2005" name="Mol. Cell. Biol.">
        <title>Protein phosphatase 5 is required for ATR-mediated checkpoint activation.</title>
        <authorList>
            <person name="Zhang J."/>
            <person name="Bao S."/>
            <person name="Furumai R."/>
            <person name="Kucera K.S."/>
            <person name="Ali A."/>
            <person name="Dean N.M."/>
            <person name="Wang X.F."/>
        </authorList>
    </citation>
    <scope>FUNCTION IN DNA DAMAGE RESPONSE</scope>
    <scope>AUTOPHOSPHORYLATION</scope>
    <scope>SUBCELLULAR LOCATION</scope>
</reference>
<reference key="38">
    <citation type="journal article" date="2008" name="Mol. Cell">
        <title>Kinase-selective enrichment enables quantitative phosphoproteomics of the kinome across the cell cycle.</title>
        <authorList>
            <person name="Daub H."/>
            <person name="Olsen J.V."/>
            <person name="Bairlein M."/>
            <person name="Gnad F."/>
            <person name="Oppermann F.S."/>
            <person name="Korner R."/>
            <person name="Greff Z."/>
            <person name="Keri G."/>
            <person name="Stemmann O."/>
            <person name="Mann M."/>
        </authorList>
    </citation>
    <scope>PHOSPHORYLATION [LARGE SCALE ANALYSIS] AT SER-428 AND THR-1989</scope>
    <scope>IDENTIFICATION BY MASS SPECTROMETRY [LARGE SCALE ANALYSIS]</scope>
    <source>
        <tissue>Cervix carcinoma</tissue>
    </source>
</reference>
<reference key="39">
    <citation type="journal article" date="2008" name="Proc. Natl. Acad. Sci. U.S.A.">
        <title>A quantitative atlas of mitotic phosphorylation.</title>
        <authorList>
            <person name="Dephoure N."/>
            <person name="Zhou C."/>
            <person name="Villen J."/>
            <person name="Beausoleil S.A."/>
            <person name="Bakalarski C.E."/>
            <person name="Elledge S.J."/>
            <person name="Gygi S.P."/>
        </authorList>
    </citation>
    <scope>IDENTIFICATION BY MASS SPECTROMETRY [LARGE SCALE ANALYSIS]</scope>
    <source>
        <tissue>Cervix carcinoma</tissue>
    </source>
</reference>
<reference key="40">
    <citation type="journal article" date="2009" name="Anal. Chem.">
        <title>Lys-N and trypsin cover complementary parts of the phosphoproteome in a refined SCX-based approach.</title>
        <authorList>
            <person name="Gauci S."/>
            <person name="Helbig A.O."/>
            <person name="Slijper M."/>
            <person name="Krijgsveld J."/>
            <person name="Heck A.J."/>
            <person name="Mohammed S."/>
        </authorList>
    </citation>
    <scope>IDENTIFICATION BY MASS SPECTROMETRY [LARGE SCALE ANALYSIS]</scope>
</reference>
<reference key="41">
    <citation type="journal article" date="2010" name="Genes Dev.">
        <title>A genetic screen identifies the Triple T complex required for DNA damage signaling and ATM and ATR stability.</title>
        <authorList>
            <person name="Hurov K.E."/>
            <person name="Cotta-Ramusino C."/>
            <person name="Elledge S.J."/>
        </authorList>
    </citation>
    <scope>INTERACTION WITH TTI1</scope>
</reference>
<reference key="42">
    <citation type="journal article" date="2010" name="Genes Dev.">
        <title>Tel2 structure and function in the Hsp90-dependent maturation of mTOR and ATR complexes.</title>
        <authorList>
            <person name="Takai H."/>
            <person name="Xie Y."/>
            <person name="de Lange T."/>
            <person name="Pavletich N.P."/>
        </authorList>
    </citation>
    <scope>INTERACTION WITH TELO2</scope>
</reference>
<reference key="43">
    <citation type="journal article" date="2010" name="J. Biol. Chem.">
        <title>Tti1 and Tel2 are critical factors in mammalian target of rapamycin complex assembly.</title>
        <authorList>
            <person name="Kaizuka T."/>
            <person name="Hara T."/>
            <person name="Oshiro N."/>
            <person name="Kikkawa U."/>
            <person name="Yonezawa K."/>
            <person name="Takehana K."/>
            <person name="Iemura S."/>
            <person name="Natsume T."/>
            <person name="Mizushima N."/>
        </authorList>
    </citation>
    <scope>INTERACTION WITH TELO2 AND TTI1</scope>
</reference>
<reference key="44">
    <citation type="journal article" date="2011" name="BMC Syst. Biol.">
        <title>Initial characterization of the human central proteome.</title>
        <authorList>
            <person name="Burkard T.R."/>
            <person name="Planyavsky M."/>
            <person name="Kaupe I."/>
            <person name="Breitwieser F.P."/>
            <person name="Buerckstuemmer T."/>
            <person name="Bennett K.L."/>
            <person name="Superti-Furga G."/>
            <person name="Colinge J."/>
        </authorList>
    </citation>
    <scope>IDENTIFICATION BY MASS SPECTROMETRY [LARGE SCALE ANALYSIS]</scope>
</reference>
<reference key="45">
    <citation type="journal article" date="2011" name="Biochem. Biophys. Res. Commun.">
        <title>Protein phosphatase 5 is necessary for ATR-mediated DNA repair.</title>
        <authorList>
            <person name="Kang Y."/>
            <person name="Cheong H.M."/>
            <person name="Lee J.H."/>
            <person name="Song P.I."/>
            <person name="Lee K.H."/>
            <person name="Kim S.Y."/>
            <person name="Jun J.Y."/>
            <person name="You H.J."/>
        </authorList>
    </citation>
    <scope>FUNCTION IN DNA REPAIR</scope>
    <scope>PHOSPHORYLATION AT SER-428</scope>
</reference>
<reference key="46">
    <citation type="journal article" date="2011" name="J. Biol. Chem.">
        <title>Thr-1989 phosphorylation is a marker of active ataxia telangiectasia-mutated and Rad3-related (ATR) kinase.</title>
        <authorList>
            <person name="Nam E.A."/>
            <person name="Zhao R."/>
            <person name="Glick G.G."/>
            <person name="Bansbach C.E."/>
            <person name="Friedman D.B."/>
            <person name="Cortez D."/>
        </authorList>
    </citation>
    <scope>PHOSPHORYLATION AT THR-1989</scope>
    <scope>MUTAGENESIS OF THR-1989</scope>
</reference>
<reference key="47">
    <citation type="journal article" date="2011" name="Mol. Cell">
        <title>ATR autophosphorylation as a molecular switch for checkpoint activation.</title>
        <authorList>
            <person name="Liu S."/>
            <person name="Shiotani B."/>
            <person name="Lahiri M."/>
            <person name="Marechal A."/>
            <person name="Tse A."/>
            <person name="Leung C.C."/>
            <person name="Glover J.N."/>
            <person name="Yang X.H."/>
            <person name="Zou L."/>
        </authorList>
    </citation>
    <scope>FUNCTION</scope>
    <scope>SUBCELLULAR LOCATION</scope>
    <scope>PHOSPHORYLATION AT SER-428; SER-435 AND THR-1989</scope>
    <scope>ACTIVITY REGULATION</scope>
    <scope>INTERACTION WITH ATRIP AND TOPBP1</scope>
</reference>
<reference key="48">
    <citation type="journal article" date="2011" name="Sci. Signal.">
        <title>System-wide temporal characterization of the proteome and phosphoproteome of human embryonic stem cell differentiation.</title>
        <authorList>
            <person name="Rigbolt K.T."/>
            <person name="Prokhorova T.A."/>
            <person name="Akimov V."/>
            <person name="Henningsen J."/>
            <person name="Johansen P.T."/>
            <person name="Kratchmarova I."/>
            <person name="Kassem M."/>
            <person name="Mann M."/>
            <person name="Olsen J.V."/>
            <person name="Blagoev B."/>
        </authorList>
    </citation>
    <scope>IDENTIFICATION BY MASS SPECTROMETRY [LARGE SCALE ANALYSIS]</scope>
</reference>
<reference key="49">
    <citation type="journal article" date="2013" name="J. Proteome Res.">
        <title>Toward a comprehensive characterization of a human cancer cell phosphoproteome.</title>
        <authorList>
            <person name="Zhou H."/>
            <person name="Di Palma S."/>
            <person name="Preisinger C."/>
            <person name="Peng M."/>
            <person name="Polat A.N."/>
            <person name="Heck A.J."/>
            <person name="Mohammed S."/>
        </authorList>
    </citation>
    <scope>PHOSPHORYLATION [LARGE SCALE ANALYSIS] AT SER-435; SER-436 AND THR-1989</scope>
    <scope>IDENTIFICATION BY MASS SPECTROMETRY [LARGE SCALE ANALYSIS]</scope>
    <source>
        <tissue>Cervix carcinoma</tissue>
        <tissue>Erythroleukemia</tissue>
    </source>
</reference>
<reference key="50">
    <citation type="journal article" date="2013" name="Mol. Cell">
        <title>Activation of DSB processing requires phosphorylation of CtIP by ATR.</title>
        <authorList>
            <person name="Peterson S.E."/>
            <person name="Li Y."/>
            <person name="Wu-Baer F."/>
            <person name="Chait B.T."/>
            <person name="Baer R."/>
            <person name="Yan H."/>
            <person name="Gottesman M.E."/>
            <person name="Gautier J."/>
        </authorList>
    </citation>
    <scope>FUNCTION</scope>
    <scope>CATALYTIC ACTIVITY</scope>
</reference>
<reference key="51">
    <citation type="journal article" date="2014" name="Cell">
        <title>ATR mediates a checkpoint at the nuclear envelope in response to mechanical stress.</title>
        <authorList>
            <person name="Kumar A."/>
            <person name="Mazzanti M."/>
            <person name="Mistrik M."/>
            <person name="Kosar M."/>
            <person name="Beznoussenko G.V."/>
            <person name="Mironov A.A."/>
            <person name="Garre M."/>
            <person name="Parazzoli D."/>
            <person name="Shivashankar G.V."/>
            <person name="Scita G."/>
            <person name="Bartek J."/>
            <person name="Foiani M."/>
        </authorList>
    </citation>
    <scope>FUNCTION</scope>
    <scope>SUBCELLULAR LOCATION</scope>
</reference>
<reference key="52">
    <citation type="journal article" date="2016" name="Nat. Cell Biol.">
        <title>ETAA1 acts at stalled replication forks to maintain genome integrity.</title>
        <authorList>
            <person name="Bass T.E."/>
            <person name="Luzwick J.W."/>
            <person name="Kavanaugh G."/>
            <person name="Carroll C."/>
            <person name="Dungrawala H."/>
            <person name="Glick G.G."/>
            <person name="Feldkamp M.D."/>
            <person name="Putney R."/>
            <person name="Chazin W.J."/>
            <person name="Cortez D."/>
        </authorList>
    </citation>
    <scope>FUNCTION</scope>
    <scope>CATALYTIC ACTIVITY</scope>
    <scope>SUBCELLULAR LOCATION</scope>
    <scope>ACTIVITY REGULATION</scope>
</reference>
<reference key="53">
    <citation type="journal article" date="2016" name="Nat. Cell Biol.">
        <title>Activation of the ATR kinase by the RPA-binding protein ETAA1.</title>
        <authorList>
            <person name="Haahr P."/>
            <person name="Hoffmann S."/>
            <person name="Tollenaere M.A."/>
            <person name="Ho T."/>
            <person name="Toledo L.I."/>
            <person name="Mann M."/>
            <person name="Bekker-Jensen S."/>
            <person name="Raeschle M."/>
            <person name="Mailand N."/>
        </authorList>
    </citation>
    <scope>FUNCTION</scope>
    <scope>CATALYTIC ACTIVITY</scope>
    <scope>ACTIVITY REGULATION</scope>
</reference>
<reference key="54">
    <citation type="journal article" date="2018" name="Science">
        <title>An intrinsic S/G2 checkpoint enforced by ATR.</title>
        <authorList>
            <person name="Saldivar J.C."/>
            <person name="Hamperl S."/>
            <person name="Bocek M.J."/>
            <person name="Chung M."/>
            <person name="Bass T.E."/>
            <person name="Cisneros-Soberanis F."/>
            <person name="Samejima K."/>
            <person name="Xie L."/>
            <person name="Paulson J.R."/>
            <person name="Earnshaw W.C."/>
            <person name="Cortez D."/>
            <person name="Meyer T."/>
            <person name="Cimprich K.A."/>
        </authorList>
    </citation>
    <scope>FUNCTION</scope>
    <scope>ACTIVITY REGULATION</scope>
</reference>
<reference key="55">
    <citation type="journal article" date="2021" name="Genes Cells">
        <title>UV-induced activation of ATR is mediated by UHRF2.</title>
        <authorList>
            <person name="Hanaki S."/>
            <person name="Habara M."/>
            <person name="Shimada M."/>
        </authorList>
    </citation>
    <scope>FUNCTION</scope>
    <scope>INTERACTION WITH UHRF2</scope>
</reference>
<reference key="56">
    <citation type="journal article" date="2023" name="Mol. Cell">
        <title>ATR promotes clearance of damaged DNA and damaged cells by rupturing micronuclei.</title>
        <authorList>
            <person name="Joo Y.K."/>
            <person name="Black E.M."/>
            <person name="Trier I."/>
            <person name="Haakma W."/>
            <person name="Zou L."/>
            <person name="Kabeche L."/>
        </authorList>
    </citation>
    <scope>FUNCTION</scope>
    <scope>CATALYTIC ACTIVITY</scope>
    <scope>SUBCELLULAR LOCATION</scope>
</reference>
<reference key="57">
    <citation type="journal article" date="2023" name="Mol. Cell">
        <title>DNA damage induces nuclear envelope rupture through ATR-mediated phosphorylation of lamin A/C.</title>
        <authorList>
            <person name="Kovacs M.T."/>
            <person name="Vallette M."/>
            <person name="Wiertsema P."/>
            <person name="Dingli F."/>
            <person name="Loew D."/>
            <person name="Nader G.P.F."/>
            <person name="Piel M."/>
            <person name="Ceccaldi R."/>
        </authorList>
    </citation>
    <scope>FUNCTION</scope>
    <scope>CATALYTIC ACTIVITY</scope>
    <scope>SUBCELLULAR LOCATION</scope>
</reference>
<reference key="58">
    <citation type="journal article" date="2007" name="Nature">
        <title>Patterns of somatic mutation in human cancer genomes.</title>
        <authorList>
            <person name="Greenman C."/>
            <person name="Stephens P."/>
            <person name="Smith R."/>
            <person name="Dalgliesh G.L."/>
            <person name="Hunter C."/>
            <person name="Bignell G."/>
            <person name="Davies H."/>
            <person name="Teague J."/>
            <person name="Butler A."/>
            <person name="Stevens C."/>
            <person name="Edkins S."/>
            <person name="O'Meara S."/>
            <person name="Vastrik I."/>
            <person name="Schmidt E.E."/>
            <person name="Avis T."/>
            <person name="Barthorpe S."/>
            <person name="Bhamra G."/>
            <person name="Buck G."/>
            <person name="Choudhury B."/>
            <person name="Clements J."/>
            <person name="Cole J."/>
            <person name="Dicks E."/>
            <person name="Forbes S."/>
            <person name="Gray K."/>
            <person name="Halliday K."/>
            <person name="Harrison R."/>
            <person name="Hills K."/>
            <person name="Hinton J."/>
            <person name="Jenkinson A."/>
            <person name="Jones D."/>
            <person name="Menzies A."/>
            <person name="Mironenko T."/>
            <person name="Perry J."/>
            <person name="Raine K."/>
            <person name="Richardson D."/>
            <person name="Shepherd R."/>
            <person name="Small A."/>
            <person name="Tofts C."/>
            <person name="Varian J."/>
            <person name="Webb T."/>
            <person name="West S."/>
            <person name="Widaa S."/>
            <person name="Yates A."/>
            <person name="Cahill D.P."/>
            <person name="Louis D.N."/>
            <person name="Goldstraw P."/>
            <person name="Nicholson A.G."/>
            <person name="Brasseur F."/>
            <person name="Looijenga L."/>
            <person name="Weber B.L."/>
            <person name="Chiew Y.-E."/>
            <person name="DeFazio A."/>
            <person name="Greaves M.F."/>
            <person name="Green A.R."/>
            <person name="Campbell P."/>
            <person name="Birney E."/>
            <person name="Easton D.F."/>
            <person name="Chenevix-Trench G."/>
            <person name="Tan M.-H."/>
            <person name="Khoo S.K."/>
            <person name="Teh B.T."/>
            <person name="Yuen S.T."/>
            <person name="Leung S.Y."/>
            <person name="Wooster R."/>
            <person name="Futreal P.A."/>
            <person name="Stratton M.R."/>
        </authorList>
    </citation>
    <scope>VARIANTS [LARGE SCALE ANALYSIS] ALA-64; TYR-90; ASN-297; ILE-316; MET-959; HIS-1087; GLY-1213; PRO-1488; ASN-1607; SER-1612; GLY-2002; ALA-2120; ASP-2132; ILE-2233; GLN-2425; ALA-2434; LYS-2438 AND GLN-2537</scope>
</reference>
<reference key="59">
    <citation type="journal article" date="2012" name="Am. J. Hum. Genet.">
        <title>Germline mutation in ATR in autosomal- dominant oropharyngeal cancer syndrome.</title>
        <authorList>
            <person name="Tanaka A."/>
            <person name="Weinel S."/>
            <person name="Nagy N."/>
            <person name="O'Driscoll M."/>
            <person name="Lai-Cheong J.E."/>
            <person name="Kulp-Shorten C.L."/>
            <person name="Knable A."/>
            <person name="Carpenter G."/>
            <person name="Fisher S.A."/>
            <person name="Hiragun M."/>
            <person name="Yanase Y."/>
            <person name="Hide M."/>
            <person name="Callen J."/>
            <person name="McGrath J.A."/>
        </authorList>
    </citation>
    <scope>VARIANT FCTCS ARG-2144</scope>
</reference>
<protein>
    <recommendedName>
        <fullName>Serine/threonine-protein kinase ATR</fullName>
        <ecNumber evidence="40 41 45 46">2.7.11.1</ecNumber>
    </recommendedName>
    <alternativeName>
        <fullName>Ataxia telangiectasia and Rad3-related protein</fullName>
    </alternativeName>
    <alternativeName>
        <fullName>FRAP-related protein 1</fullName>
    </alternativeName>
</protein>
<proteinExistence type="evidence at protein level"/>
<gene>
    <name evidence="58 61" type="primary">ATR</name>
    <name type="synonym">FRP1</name>
</gene>